<name>DAD1_ARATH</name>
<comment type="function">
    <text evidence="2">Subunit of the oligosaccharyl transferase (OST) complex that catalyzes the initial transfer of a defined glycan (Glc(3)Man(9)GlcNAc(2) in eukaryotes) from the lipid carrier dolichol-pyrophosphate to an asparagine residue within an Asn-X-Ser/Thr consensus motif in nascent polypeptide chains, the first step in protein N-glycosylation. N-glycosylation occurs cotranslationally and the complex associates with the Sec61 complex at the channel-forming translocon complex that mediates protein translocation across the endoplasmic reticulum (ER). All subunits are required for a maximal enzyme activity.</text>
</comment>
<comment type="pathway">
    <text>Protein modification; protein glycosylation.</text>
</comment>
<comment type="subunit">
    <text evidence="2">Component of the oligosaccharyltransferase (OST) complex.</text>
</comment>
<comment type="subcellular location">
    <subcellularLocation>
        <location evidence="1">Endoplasmic reticulum membrane</location>
        <topology evidence="1">Multi-pass membrane protein</topology>
    </subcellularLocation>
</comment>
<comment type="tissue specificity">
    <text>Ubiquitous.</text>
</comment>
<comment type="similarity">
    <text evidence="4">Belongs to the DAD/OST2 family.</text>
</comment>
<accession>Q39080</accession>
<accession>Q53WQ9</accession>
<protein>
    <recommendedName>
        <fullName>Dolichyl-diphosphooligosaccharide--protein glycosyltransferase subunit DAD1</fullName>
        <shortName>Oligosaccharyl transferase subunit DAD1</shortName>
    </recommendedName>
    <alternativeName>
        <fullName>Defender against cell death 1</fullName>
        <shortName>AtDAD1</shortName>
        <shortName>DAD-1</shortName>
    </alternativeName>
</protein>
<keyword id="KW-0053">Apoptosis</keyword>
<keyword id="KW-0256">Endoplasmic reticulum</keyword>
<keyword id="KW-0472">Membrane</keyword>
<keyword id="KW-1185">Reference proteome</keyword>
<keyword id="KW-0812">Transmembrane</keyword>
<keyword id="KW-1133">Transmembrane helix</keyword>
<evidence type="ECO:0000250" key="1"/>
<evidence type="ECO:0000250" key="2">
    <source>
        <dbReference type="UniProtKB" id="P46964"/>
    </source>
</evidence>
<evidence type="ECO:0000255" key="3"/>
<evidence type="ECO:0000305" key="4"/>
<dbReference type="EMBL" id="X95585">
    <property type="protein sequence ID" value="CAA64837.1"/>
    <property type="molecule type" value="mRNA"/>
</dbReference>
<dbReference type="EMBL" id="Y17608">
    <property type="protein sequence ID" value="CAC80054.1"/>
    <property type="molecule type" value="Genomic_DNA"/>
</dbReference>
<dbReference type="EMBL" id="AC084165">
    <property type="protein sequence ID" value="AAG23438.1"/>
    <property type="molecule type" value="Genomic_DNA"/>
</dbReference>
<dbReference type="EMBL" id="CP002684">
    <property type="protein sequence ID" value="AEE31449.1"/>
    <property type="molecule type" value="Genomic_DNA"/>
</dbReference>
<dbReference type="EMBL" id="BT024553">
    <property type="protein sequence ID" value="ABD38892.1"/>
    <property type="molecule type" value="mRNA"/>
</dbReference>
<dbReference type="PIR" id="F86446">
    <property type="entry name" value="F86446"/>
</dbReference>
<dbReference type="PIR" id="S71269">
    <property type="entry name" value="S71269"/>
</dbReference>
<dbReference type="SMR" id="Q39080"/>
<dbReference type="BioGRID" id="25347">
    <property type="interactions" value="18"/>
</dbReference>
<dbReference type="FunCoup" id="Q39080">
    <property type="interactions" value="3825"/>
</dbReference>
<dbReference type="IntAct" id="Q39080">
    <property type="interactions" value="17"/>
</dbReference>
<dbReference type="STRING" id="3702.Q39080"/>
<dbReference type="PaxDb" id="3702-AT1G32210.1"/>
<dbReference type="EnsemblPlants" id="AT1G32210.1">
    <property type="protein sequence ID" value="AT1G32210.1"/>
    <property type="gene ID" value="AT1G32210"/>
</dbReference>
<dbReference type="GeneID" id="840113"/>
<dbReference type="Gramene" id="AT1G32210.1">
    <property type="protein sequence ID" value="AT1G32210.1"/>
    <property type="gene ID" value="AT1G32210"/>
</dbReference>
<dbReference type="KEGG" id="ath:AT1G32210"/>
<dbReference type="Araport" id="AT1G32210"/>
<dbReference type="TAIR" id="AT1G32210">
    <property type="gene designation" value="ATDAD1"/>
</dbReference>
<dbReference type="eggNOG" id="KOG1746">
    <property type="taxonomic scope" value="Eukaryota"/>
</dbReference>
<dbReference type="HOGENOM" id="CLU_111220_2_1_1"/>
<dbReference type="InParanoid" id="Q39080"/>
<dbReference type="OMA" id="HIILHIV"/>
<dbReference type="OrthoDB" id="1051845at2759"/>
<dbReference type="PhylomeDB" id="Q39080"/>
<dbReference type="UniPathway" id="UPA00378"/>
<dbReference type="PRO" id="PR:Q39080"/>
<dbReference type="Proteomes" id="UP000006548">
    <property type="component" value="Chromosome 1"/>
</dbReference>
<dbReference type="ExpressionAtlas" id="Q39080">
    <property type="expression patterns" value="baseline and differential"/>
</dbReference>
<dbReference type="GO" id="GO:0005783">
    <property type="term" value="C:endoplasmic reticulum"/>
    <property type="evidence" value="ECO:0007005"/>
    <property type="project" value="TAIR"/>
</dbReference>
<dbReference type="GO" id="GO:0016020">
    <property type="term" value="C:membrane"/>
    <property type="evidence" value="ECO:0000250"/>
    <property type="project" value="TAIR"/>
</dbReference>
<dbReference type="GO" id="GO:0005634">
    <property type="term" value="C:nucleus"/>
    <property type="evidence" value="ECO:0007005"/>
    <property type="project" value="TAIR"/>
</dbReference>
<dbReference type="GO" id="GO:0008250">
    <property type="term" value="C:oligosaccharyltransferase complex"/>
    <property type="evidence" value="ECO:0007669"/>
    <property type="project" value="InterPro"/>
</dbReference>
<dbReference type="GO" id="GO:0006486">
    <property type="term" value="P:protein glycosylation"/>
    <property type="evidence" value="ECO:0007669"/>
    <property type="project" value="UniProtKB-UniPathway"/>
</dbReference>
<dbReference type="InterPro" id="IPR003038">
    <property type="entry name" value="DAD/Ost2"/>
</dbReference>
<dbReference type="PANTHER" id="PTHR10705">
    <property type="entry name" value="DOLICHYL-DIPHOSPHOOLIGOSACCHARIDE--PROTEIN GLYCOSYLTRANSFERASE SUBUNIT DAD1"/>
    <property type="match status" value="1"/>
</dbReference>
<dbReference type="PANTHER" id="PTHR10705:SF0">
    <property type="entry name" value="DOLICHYL-DIPHOSPHOOLIGOSACCHARIDE--PROTEIN GLYCOSYLTRANSFERASE SUBUNIT DAD1"/>
    <property type="match status" value="1"/>
</dbReference>
<dbReference type="Pfam" id="PF02109">
    <property type="entry name" value="DAD"/>
    <property type="match status" value="1"/>
</dbReference>
<dbReference type="PIRSF" id="PIRSF005588">
    <property type="entry name" value="DAD"/>
    <property type="match status" value="1"/>
</dbReference>
<proteinExistence type="evidence at transcript level"/>
<gene>
    <name type="primary">DAD1</name>
    <name type="ordered locus">At1g32210</name>
    <name type="ORF">F3C3.14</name>
</gene>
<feature type="chain" id="PRO_0000124019" description="Dolichyl-diphosphooligosaccharide--protein glycosyltransferase subunit DAD1">
    <location>
        <begin position="1"/>
        <end position="115"/>
    </location>
</feature>
<feature type="topological domain" description="Cytoplasmic" evidence="3">
    <location>
        <begin position="1"/>
        <end position="31"/>
    </location>
</feature>
<feature type="transmembrane region" description="Helical" evidence="3">
    <location>
        <begin position="32"/>
        <end position="52"/>
    </location>
</feature>
<feature type="topological domain" description="Lumenal" evidence="3">
    <location>
        <begin position="53"/>
        <end position="55"/>
    </location>
</feature>
<feature type="transmembrane region" description="Helical" evidence="3">
    <location>
        <begin position="56"/>
        <end position="76"/>
    </location>
</feature>
<feature type="topological domain" description="Cytoplasmic" evidence="3">
    <location>
        <begin position="77"/>
        <end position="94"/>
    </location>
</feature>
<feature type="transmembrane region" description="Helical" evidence="3">
    <location>
        <begin position="95"/>
        <end position="115"/>
    </location>
</feature>
<feature type="sequence conflict" description="In Ref. 1; CAA64837." evidence="4" ref="1">
    <original>C</original>
    <variation>Y</variation>
    <location>
        <position position="102"/>
    </location>
</feature>
<organism>
    <name type="scientific">Arabidopsis thaliana</name>
    <name type="common">Mouse-ear cress</name>
    <dbReference type="NCBI Taxonomy" id="3702"/>
    <lineage>
        <taxon>Eukaryota</taxon>
        <taxon>Viridiplantae</taxon>
        <taxon>Streptophyta</taxon>
        <taxon>Embryophyta</taxon>
        <taxon>Tracheophyta</taxon>
        <taxon>Spermatophyta</taxon>
        <taxon>Magnoliopsida</taxon>
        <taxon>eudicotyledons</taxon>
        <taxon>Gunneridae</taxon>
        <taxon>Pentapetalae</taxon>
        <taxon>rosids</taxon>
        <taxon>malvids</taxon>
        <taxon>Brassicales</taxon>
        <taxon>Brassicaceae</taxon>
        <taxon>Camelineae</taxon>
        <taxon>Arabidopsis</taxon>
    </lineage>
</organism>
<reference key="1">
    <citation type="journal article" date="1997" name="Plant J.">
        <title>An Arabidopsis thaliana cDNA complementing a hamster apoptosis suppressor mutant.</title>
        <authorList>
            <person name="Gallois P."/>
            <person name="Makishima T."/>
            <person name="Hecht V."/>
            <person name="Depres B."/>
            <person name="Laudii M."/>
            <person name="Nishimoto T."/>
            <person name="Cooke R."/>
        </authorList>
    </citation>
    <scope>NUCLEOTIDE SEQUENCE [MRNA]</scope>
    <source>
        <strain>cv. Columbia</strain>
    </source>
</reference>
<reference key="2">
    <citation type="submission" date="1998-06" db="EMBL/GenBank/DDBJ databases">
        <title>Differential regulation of two types of the defender against apoptotic cell death 1 (dad1) genes in senescing cotyledons and petals of Arabidopsis thaliana.</title>
        <authorList>
            <person name="Sugiura T."/>
            <person name="Naito K."/>
            <person name="Asahi T."/>
            <person name="Suzuki H."/>
        </authorList>
    </citation>
    <scope>NUCLEOTIDE SEQUENCE [GENOMIC DNA]</scope>
    <source>
        <strain>cv. Columbia</strain>
    </source>
</reference>
<reference key="3">
    <citation type="journal article" date="2000" name="Nature">
        <title>Sequence and analysis of chromosome 1 of the plant Arabidopsis thaliana.</title>
        <authorList>
            <person name="Theologis A."/>
            <person name="Ecker J.R."/>
            <person name="Palm C.J."/>
            <person name="Federspiel N.A."/>
            <person name="Kaul S."/>
            <person name="White O."/>
            <person name="Alonso J."/>
            <person name="Altafi H."/>
            <person name="Araujo R."/>
            <person name="Bowman C.L."/>
            <person name="Brooks S.Y."/>
            <person name="Buehler E."/>
            <person name="Chan A."/>
            <person name="Chao Q."/>
            <person name="Chen H."/>
            <person name="Cheuk R.F."/>
            <person name="Chin C.W."/>
            <person name="Chung M.K."/>
            <person name="Conn L."/>
            <person name="Conway A.B."/>
            <person name="Conway A.R."/>
            <person name="Creasy T.H."/>
            <person name="Dewar K."/>
            <person name="Dunn P."/>
            <person name="Etgu P."/>
            <person name="Feldblyum T.V."/>
            <person name="Feng J.-D."/>
            <person name="Fong B."/>
            <person name="Fujii C.Y."/>
            <person name="Gill J.E."/>
            <person name="Goldsmith A.D."/>
            <person name="Haas B."/>
            <person name="Hansen N.F."/>
            <person name="Hughes B."/>
            <person name="Huizar L."/>
            <person name="Hunter J.L."/>
            <person name="Jenkins J."/>
            <person name="Johnson-Hopson C."/>
            <person name="Khan S."/>
            <person name="Khaykin E."/>
            <person name="Kim C.J."/>
            <person name="Koo H.L."/>
            <person name="Kremenetskaia I."/>
            <person name="Kurtz D.B."/>
            <person name="Kwan A."/>
            <person name="Lam B."/>
            <person name="Langin-Hooper S."/>
            <person name="Lee A."/>
            <person name="Lee J.M."/>
            <person name="Lenz C.A."/>
            <person name="Li J.H."/>
            <person name="Li Y.-P."/>
            <person name="Lin X."/>
            <person name="Liu S.X."/>
            <person name="Liu Z.A."/>
            <person name="Luros J.S."/>
            <person name="Maiti R."/>
            <person name="Marziali A."/>
            <person name="Militscher J."/>
            <person name="Miranda M."/>
            <person name="Nguyen M."/>
            <person name="Nierman W.C."/>
            <person name="Osborne B.I."/>
            <person name="Pai G."/>
            <person name="Peterson J."/>
            <person name="Pham P.K."/>
            <person name="Rizzo M."/>
            <person name="Rooney T."/>
            <person name="Rowley D."/>
            <person name="Sakano H."/>
            <person name="Salzberg S.L."/>
            <person name="Schwartz J.R."/>
            <person name="Shinn P."/>
            <person name="Southwick A.M."/>
            <person name="Sun H."/>
            <person name="Tallon L.J."/>
            <person name="Tambunga G."/>
            <person name="Toriumi M.J."/>
            <person name="Town C.D."/>
            <person name="Utterback T."/>
            <person name="Van Aken S."/>
            <person name="Vaysberg M."/>
            <person name="Vysotskaia V.S."/>
            <person name="Walker M."/>
            <person name="Wu D."/>
            <person name="Yu G."/>
            <person name="Fraser C.M."/>
            <person name="Venter J.C."/>
            <person name="Davis R.W."/>
        </authorList>
    </citation>
    <scope>NUCLEOTIDE SEQUENCE [LARGE SCALE GENOMIC DNA]</scope>
    <source>
        <strain>cv. Columbia</strain>
    </source>
</reference>
<reference key="4">
    <citation type="journal article" date="2017" name="Plant J.">
        <title>Araport11: a complete reannotation of the Arabidopsis thaliana reference genome.</title>
        <authorList>
            <person name="Cheng C.Y."/>
            <person name="Krishnakumar V."/>
            <person name="Chan A.P."/>
            <person name="Thibaud-Nissen F."/>
            <person name="Schobel S."/>
            <person name="Town C.D."/>
        </authorList>
    </citation>
    <scope>GENOME REANNOTATION</scope>
    <source>
        <strain>cv. Columbia</strain>
    </source>
</reference>
<reference key="5">
    <citation type="submission" date="2006-02" db="EMBL/GenBank/DDBJ databases">
        <title>Arabidopsis ORF clones.</title>
        <authorList>
            <person name="Shinn P."/>
            <person name="Chen H."/>
            <person name="Kim C.J."/>
            <person name="Ecker J.R."/>
        </authorList>
    </citation>
    <scope>NUCLEOTIDE SEQUENCE [LARGE SCALE MRNA]</scope>
    <source>
        <strain>cv. Columbia</strain>
    </source>
</reference>
<sequence length="115" mass="12695">MVKSTSKDAQDLFRSLRSAYSATPTNLKIIDLYVVFAVFTALIQVVYMALVGSFPFNSFLSGVLSCIGTAVLAVCLRIQVNKENKEFKDLAPERAFADFVLCNLVLHLVIINFLG</sequence>